<sequence length="868" mass="97635">METRNKFMLLACATFSIMSLVKSQNQQGFISLDCGLPSKESYIEPSSNLTFISDVNFIRGGKTGNIQNNSRTNFIFKPFKVLRYFPDGIRNCYSLSVKQGTKYLIRTLFYYGNYDGLNTSPRFDLFLGPNIWTSVDVLIADVGDGVVEEIVHVTRSNILDICLVKTGTSTPMISAIELRPLRYDTYTARTGSLKSMAHFYFTNSDEAIRYPEDVYDRVWMPYSQPEWTQINTTRNVSGFSDGYNPPQGVIQTASIPTNGSEPLTFTWNLESSDDETYAYLFFAEIQQLKVNETREFKILANGVDYIDYTPWKFEARTLSNPAPLKCEGGVCRVQLSKTPKSTLPPLMNAIEIFSVIQFPQSDTNTDEVIAIKKIQSTYQLSRISWQGDPCVPKQFSWMGVSCNVIDISTPPRIISLDLSLSGLTGVISPSIQNLTMLRELDLSNNNLTGEVPEFLATIKPLLVIHLRGNNLRGSVPQALQDREKNDGLKLFVDPNITRRGKHQPKSWLVAIVASISCVAVTIIVLVLIFIFRRRKSSTRKVIRPSLEMKNRRFKYSEVKEMTNNFEVVLGKGGFGVVYHGFLNNEQVAVKVLSQSSTQGYKEFKTEVELLLRVHHVNLVSLVGYCDEGIDLALIYEFMENGNLKEHLSGKRGGSVLNWSSRLKIAIESALGIEYLHIGCQPPMVHRDVKSTNILLGLRFEAKLADFGLSRSFLVGSQAHVSTNVAGTLGYLDPEYYLKNWLTEKSDVYSFGIVLLESITGQPVIEQSRDKSYIVEWAKSMLANGDIESIMDPNLHQDYDSSSSWKALELAMLCINPSSTQRPNMTRVAHELNECLEIYNLTKIRSQDQNSSKSLGHTVTFISDIPSAR</sequence>
<keyword id="KW-0067">ATP-binding</keyword>
<keyword id="KW-1003">Cell membrane</keyword>
<keyword id="KW-0325">Glycoprotein</keyword>
<keyword id="KW-0418">Kinase</keyword>
<keyword id="KW-0433">Leucine-rich repeat</keyword>
<keyword id="KW-0472">Membrane</keyword>
<keyword id="KW-0547">Nucleotide-binding</keyword>
<keyword id="KW-0597">Phosphoprotein</keyword>
<keyword id="KW-0675">Receptor</keyword>
<keyword id="KW-1185">Reference proteome</keyword>
<keyword id="KW-0677">Repeat</keyword>
<keyword id="KW-0723">Serine/threonine-protein kinase</keyword>
<keyword id="KW-0732">Signal</keyword>
<keyword id="KW-0808">Transferase</keyword>
<keyword id="KW-0812">Transmembrane</keyword>
<keyword id="KW-1133">Transmembrane helix</keyword>
<proteinExistence type="evidence at protein level"/>
<comment type="catalytic activity">
    <reaction>
        <text>L-seryl-[protein] + ATP = O-phospho-L-seryl-[protein] + ADP + H(+)</text>
        <dbReference type="Rhea" id="RHEA:17989"/>
        <dbReference type="Rhea" id="RHEA-COMP:9863"/>
        <dbReference type="Rhea" id="RHEA-COMP:11604"/>
        <dbReference type="ChEBI" id="CHEBI:15378"/>
        <dbReference type="ChEBI" id="CHEBI:29999"/>
        <dbReference type="ChEBI" id="CHEBI:30616"/>
        <dbReference type="ChEBI" id="CHEBI:83421"/>
        <dbReference type="ChEBI" id="CHEBI:456216"/>
        <dbReference type="EC" id="2.7.11.1"/>
    </reaction>
</comment>
<comment type="catalytic activity">
    <reaction>
        <text>L-threonyl-[protein] + ATP = O-phospho-L-threonyl-[protein] + ADP + H(+)</text>
        <dbReference type="Rhea" id="RHEA:46608"/>
        <dbReference type="Rhea" id="RHEA-COMP:11060"/>
        <dbReference type="Rhea" id="RHEA-COMP:11605"/>
        <dbReference type="ChEBI" id="CHEBI:15378"/>
        <dbReference type="ChEBI" id="CHEBI:30013"/>
        <dbReference type="ChEBI" id="CHEBI:30616"/>
        <dbReference type="ChEBI" id="CHEBI:61977"/>
        <dbReference type="ChEBI" id="CHEBI:456216"/>
        <dbReference type="EC" id="2.7.11.1"/>
    </reaction>
</comment>
<comment type="interaction">
    <interactant intactId="EBI-20651957">
        <id>Q9ZQR3</id>
    </interactant>
    <interactant intactId="EBI-20651225">
        <id>C0LGI5</id>
        <label>At1g69990</label>
    </interactant>
    <organismsDiffer>false</organismsDiffer>
    <experiments>2</experiments>
</comment>
<comment type="interaction">
    <interactant intactId="EBI-20651957">
        <id>Q9ZQR3</id>
    </interactant>
    <interactant intactId="EBI-16902452">
        <id>Q8VYT3</id>
        <label>At4g30520</label>
    </interactant>
    <organismsDiffer>false</organismsDiffer>
    <experiments>2</experiments>
</comment>
<comment type="interaction">
    <interactant intactId="EBI-20651957">
        <id>Q9ZQR3</id>
    </interactant>
    <interactant intactId="EBI-6298290">
        <id>Q9ASS4</id>
        <label>At5g48380</label>
    </interactant>
    <organismsDiffer>false</organismsDiffer>
    <experiments>2</experiments>
</comment>
<comment type="interaction">
    <interactant intactId="EBI-20651957">
        <id>Q9ZQR3</id>
    </interactant>
    <interactant intactId="EBI-20653342">
        <id>A0A178UFM8</id>
        <label>At5g51560</label>
    </interactant>
    <organismsDiffer>false</organismsDiffer>
    <experiments>2</experiments>
</comment>
<comment type="interaction">
    <interactant intactId="EBI-20651957">
        <id>Q9ZQR3</id>
    </interactant>
    <interactant intactId="EBI-617138">
        <id>Q94F62</id>
        <label>BAK1</label>
    </interactant>
    <organismsDiffer>false</organismsDiffer>
    <experiments>2</experiments>
</comment>
<comment type="interaction">
    <interactant intactId="EBI-20651957">
        <id>Q9ZQR3</id>
    </interactant>
    <interactant intactId="EBI-16895926">
        <id>Q6XAT2</id>
        <label>ERL2</label>
    </interactant>
    <organismsDiffer>false</organismsDiffer>
    <experiments>2</experiments>
</comment>
<comment type="interaction">
    <interactant intactId="EBI-20651957">
        <id>Q9ZQR3</id>
    </interactant>
    <interactant intactId="EBI-1238953">
        <id>Q9ZRF9</id>
        <label>RPK1</label>
    </interactant>
    <organismsDiffer>false</organismsDiffer>
    <experiments>2</experiments>
</comment>
<comment type="interaction">
    <interactant intactId="EBI-20651957">
        <id>Q9ZQR3</id>
    </interactant>
    <interactant intactId="EBI-17072125">
        <id>Q8RWZ1</id>
        <label>SUB</label>
    </interactant>
    <organismsDiffer>false</organismsDiffer>
    <experiments>2</experiments>
</comment>
<comment type="subcellular location">
    <subcellularLocation>
        <location evidence="1">Cell membrane</location>
        <topology evidence="1">Single-pass type I membrane protein</topology>
    </subcellularLocation>
</comment>
<comment type="similarity">
    <text evidence="4">Belongs to the protein kinase superfamily. Ser/Thr protein kinase family.</text>
</comment>
<accession>Q9ZQR3</accession>
<protein>
    <recommendedName>
        <fullName>Leucine-rich repeat receptor-like serine/threonine-protein kinase At2g14510</fullName>
        <ecNumber>2.7.11.1</ecNumber>
    </recommendedName>
</protein>
<gene>
    <name type="ordered locus">At2g14510</name>
    <name type="ORF">T13P21.11</name>
</gene>
<evidence type="ECO:0000250" key="1"/>
<evidence type="ECO:0000250" key="2">
    <source>
        <dbReference type="UniProtKB" id="O48814"/>
    </source>
</evidence>
<evidence type="ECO:0000255" key="3"/>
<evidence type="ECO:0000255" key="4">
    <source>
        <dbReference type="PROSITE-ProRule" id="PRU00159"/>
    </source>
</evidence>
<evidence type="ECO:0000255" key="5">
    <source>
        <dbReference type="PROSITE-ProRule" id="PRU10027"/>
    </source>
</evidence>
<reference key="1">
    <citation type="journal article" date="1999" name="Nature">
        <title>Sequence and analysis of chromosome 2 of the plant Arabidopsis thaliana.</title>
        <authorList>
            <person name="Lin X."/>
            <person name="Kaul S."/>
            <person name="Rounsley S.D."/>
            <person name="Shea T.P."/>
            <person name="Benito M.-I."/>
            <person name="Town C.D."/>
            <person name="Fujii C.Y."/>
            <person name="Mason T.M."/>
            <person name="Bowman C.L."/>
            <person name="Barnstead M.E."/>
            <person name="Feldblyum T.V."/>
            <person name="Buell C.R."/>
            <person name="Ketchum K.A."/>
            <person name="Lee J.J."/>
            <person name="Ronning C.M."/>
            <person name="Koo H.L."/>
            <person name="Moffat K.S."/>
            <person name="Cronin L.A."/>
            <person name="Shen M."/>
            <person name="Pai G."/>
            <person name="Van Aken S."/>
            <person name="Umayam L."/>
            <person name="Tallon L.J."/>
            <person name="Gill J.E."/>
            <person name="Adams M.D."/>
            <person name="Carrera A.J."/>
            <person name="Creasy T.H."/>
            <person name="Goodman H.M."/>
            <person name="Somerville C.R."/>
            <person name="Copenhaver G.P."/>
            <person name="Preuss D."/>
            <person name="Nierman W.C."/>
            <person name="White O."/>
            <person name="Eisen J.A."/>
            <person name="Salzberg S.L."/>
            <person name="Fraser C.M."/>
            <person name="Venter J.C."/>
        </authorList>
    </citation>
    <scope>NUCLEOTIDE SEQUENCE [LARGE SCALE GENOMIC DNA]</scope>
    <source>
        <strain>cv. Columbia</strain>
    </source>
</reference>
<reference key="2">
    <citation type="journal article" date="2017" name="Plant J.">
        <title>Araport11: a complete reannotation of the Arabidopsis thaliana reference genome.</title>
        <authorList>
            <person name="Cheng C.Y."/>
            <person name="Krishnakumar V."/>
            <person name="Chan A.P."/>
            <person name="Thibaud-Nissen F."/>
            <person name="Schobel S."/>
            <person name="Town C.D."/>
        </authorList>
    </citation>
    <scope>GENOME REANNOTATION</scope>
    <source>
        <strain>cv. Columbia</strain>
    </source>
</reference>
<reference key="3">
    <citation type="journal article" date="2010" name="BMC Genomics">
        <title>Genome-wide cloning and sequence analysis of leucine-rich repeat receptor-like protein kinase genes in Arabidopsis thaliana.</title>
        <authorList>
            <person name="Gou X."/>
            <person name="He K."/>
            <person name="Yang H."/>
            <person name="Yuan T."/>
            <person name="Lin H."/>
            <person name="Clouse S.D."/>
            <person name="Li J."/>
        </authorList>
    </citation>
    <scope>NUCLEOTIDE SEQUENCE [LARGE SCALE MRNA]</scope>
    <source>
        <strain>cv. Columbia</strain>
    </source>
</reference>
<dbReference type="EC" id="2.7.11.1"/>
<dbReference type="EMBL" id="AC006067">
    <property type="protein sequence ID" value="AAD15465.1"/>
    <property type="molecule type" value="Genomic_DNA"/>
</dbReference>
<dbReference type="EMBL" id="CP002685">
    <property type="protein sequence ID" value="AEC06307.1"/>
    <property type="molecule type" value="Genomic_DNA"/>
</dbReference>
<dbReference type="EMBL" id="FJ708693">
    <property type="protein sequence ID" value="ACN59288.1"/>
    <property type="molecule type" value="mRNA"/>
</dbReference>
<dbReference type="PIR" id="A84518">
    <property type="entry name" value="A84518"/>
</dbReference>
<dbReference type="RefSeq" id="NP_179057.1">
    <property type="nucleotide sequence ID" value="NM_127014.2"/>
</dbReference>
<dbReference type="SMR" id="Q9ZQR3"/>
<dbReference type="BioGRID" id="1297">
    <property type="interactions" value="26"/>
</dbReference>
<dbReference type="IntAct" id="Q9ZQR3">
    <property type="interactions" value="31"/>
</dbReference>
<dbReference type="STRING" id="3702.Q9ZQR3"/>
<dbReference type="GlyGen" id="Q9ZQR3">
    <property type="glycosylation" value="9 sites"/>
</dbReference>
<dbReference type="PaxDb" id="3702-AT2G14510.1"/>
<dbReference type="EnsemblPlants" id="AT2G14510.1">
    <property type="protein sequence ID" value="AT2G14510.1"/>
    <property type="gene ID" value="AT2G14510"/>
</dbReference>
<dbReference type="GeneID" id="815938"/>
<dbReference type="Gramene" id="AT2G14510.1">
    <property type="protein sequence ID" value="AT2G14510.1"/>
    <property type="gene ID" value="AT2G14510"/>
</dbReference>
<dbReference type="KEGG" id="ath:AT2G14510"/>
<dbReference type="Araport" id="AT2G14510"/>
<dbReference type="TAIR" id="AT2G14510"/>
<dbReference type="eggNOG" id="ENOG502QQCZ">
    <property type="taxonomic scope" value="Eukaryota"/>
</dbReference>
<dbReference type="HOGENOM" id="CLU_000288_41_1_1"/>
<dbReference type="InParanoid" id="Q9ZQR3"/>
<dbReference type="OMA" id="ARAQTHI"/>
<dbReference type="PhylomeDB" id="Q9ZQR3"/>
<dbReference type="PRO" id="PR:Q9ZQR3"/>
<dbReference type="Proteomes" id="UP000006548">
    <property type="component" value="Chromosome 2"/>
</dbReference>
<dbReference type="ExpressionAtlas" id="Q9ZQR3">
    <property type="expression patterns" value="baseline and differential"/>
</dbReference>
<dbReference type="GO" id="GO:0005886">
    <property type="term" value="C:plasma membrane"/>
    <property type="evidence" value="ECO:0007669"/>
    <property type="project" value="UniProtKB-SubCell"/>
</dbReference>
<dbReference type="GO" id="GO:0005524">
    <property type="term" value="F:ATP binding"/>
    <property type="evidence" value="ECO:0007669"/>
    <property type="project" value="UniProtKB-KW"/>
</dbReference>
<dbReference type="GO" id="GO:0106310">
    <property type="term" value="F:protein serine kinase activity"/>
    <property type="evidence" value="ECO:0007669"/>
    <property type="project" value="RHEA"/>
</dbReference>
<dbReference type="GO" id="GO:0004674">
    <property type="term" value="F:protein serine/threonine kinase activity"/>
    <property type="evidence" value="ECO:0007669"/>
    <property type="project" value="UniProtKB-KW"/>
</dbReference>
<dbReference type="CDD" id="cd14066">
    <property type="entry name" value="STKc_IRAK"/>
    <property type="match status" value="1"/>
</dbReference>
<dbReference type="FunFam" id="3.80.10.10:FF:000129">
    <property type="entry name" value="Leucine-rich repeat receptor-like kinase"/>
    <property type="match status" value="1"/>
</dbReference>
<dbReference type="FunFam" id="3.30.200.20:FF:000394">
    <property type="entry name" value="Leucine-rich repeat receptor-like protein kinase"/>
    <property type="match status" value="1"/>
</dbReference>
<dbReference type="FunFam" id="1.10.510.10:FF:000146">
    <property type="entry name" value="LRR receptor-like serine/threonine-protein kinase IOS1"/>
    <property type="match status" value="1"/>
</dbReference>
<dbReference type="Gene3D" id="3.30.200.20">
    <property type="entry name" value="Phosphorylase Kinase, domain 1"/>
    <property type="match status" value="1"/>
</dbReference>
<dbReference type="Gene3D" id="3.80.10.10">
    <property type="entry name" value="Ribonuclease Inhibitor"/>
    <property type="match status" value="1"/>
</dbReference>
<dbReference type="Gene3D" id="1.10.510.10">
    <property type="entry name" value="Transferase(Phosphotransferase) domain 1"/>
    <property type="match status" value="1"/>
</dbReference>
<dbReference type="InterPro" id="IPR011009">
    <property type="entry name" value="Kinase-like_dom_sf"/>
</dbReference>
<dbReference type="InterPro" id="IPR001611">
    <property type="entry name" value="Leu-rich_rpt"/>
</dbReference>
<dbReference type="InterPro" id="IPR032675">
    <property type="entry name" value="LRR_dom_sf"/>
</dbReference>
<dbReference type="InterPro" id="IPR024788">
    <property type="entry name" value="Malectin-like_Carb-bd_dom"/>
</dbReference>
<dbReference type="InterPro" id="IPR000719">
    <property type="entry name" value="Prot_kinase_dom"/>
</dbReference>
<dbReference type="InterPro" id="IPR017441">
    <property type="entry name" value="Protein_kinase_ATP_BS"/>
</dbReference>
<dbReference type="InterPro" id="IPR008271">
    <property type="entry name" value="Ser/Thr_kinase_AS"/>
</dbReference>
<dbReference type="PANTHER" id="PTHR45631:SF151">
    <property type="entry name" value="MALECTIN-LIKE DOMAIN-CONTAINING PROTEIN"/>
    <property type="match status" value="1"/>
</dbReference>
<dbReference type="PANTHER" id="PTHR45631">
    <property type="entry name" value="OS07G0107800 PROTEIN-RELATED"/>
    <property type="match status" value="1"/>
</dbReference>
<dbReference type="Pfam" id="PF00560">
    <property type="entry name" value="LRR_1"/>
    <property type="match status" value="1"/>
</dbReference>
<dbReference type="Pfam" id="PF12819">
    <property type="entry name" value="Malectin_like"/>
    <property type="match status" value="1"/>
</dbReference>
<dbReference type="Pfam" id="PF00069">
    <property type="entry name" value="Pkinase"/>
    <property type="match status" value="1"/>
</dbReference>
<dbReference type="SMART" id="SM00220">
    <property type="entry name" value="S_TKc"/>
    <property type="match status" value="1"/>
</dbReference>
<dbReference type="SUPFAM" id="SSF52058">
    <property type="entry name" value="L domain-like"/>
    <property type="match status" value="1"/>
</dbReference>
<dbReference type="SUPFAM" id="SSF56112">
    <property type="entry name" value="Protein kinase-like (PK-like)"/>
    <property type="match status" value="1"/>
</dbReference>
<dbReference type="PROSITE" id="PS00107">
    <property type="entry name" value="PROTEIN_KINASE_ATP"/>
    <property type="match status" value="1"/>
</dbReference>
<dbReference type="PROSITE" id="PS50011">
    <property type="entry name" value="PROTEIN_KINASE_DOM"/>
    <property type="match status" value="1"/>
</dbReference>
<dbReference type="PROSITE" id="PS00108">
    <property type="entry name" value="PROTEIN_KINASE_ST"/>
    <property type="match status" value="1"/>
</dbReference>
<organism>
    <name type="scientific">Arabidopsis thaliana</name>
    <name type="common">Mouse-ear cress</name>
    <dbReference type="NCBI Taxonomy" id="3702"/>
    <lineage>
        <taxon>Eukaryota</taxon>
        <taxon>Viridiplantae</taxon>
        <taxon>Streptophyta</taxon>
        <taxon>Embryophyta</taxon>
        <taxon>Tracheophyta</taxon>
        <taxon>Spermatophyta</taxon>
        <taxon>Magnoliopsida</taxon>
        <taxon>eudicotyledons</taxon>
        <taxon>Gunneridae</taxon>
        <taxon>Pentapetalae</taxon>
        <taxon>rosids</taxon>
        <taxon>malvids</taxon>
        <taxon>Brassicales</taxon>
        <taxon>Brassicaceae</taxon>
        <taxon>Camelineae</taxon>
        <taxon>Arabidopsis</taxon>
    </lineage>
</organism>
<feature type="signal peptide" evidence="3">
    <location>
        <begin position="1"/>
        <end position="23"/>
    </location>
</feature>
<feature type="chain" id="PRO_0000403344" description="Leucine-rich repeat receptor-like serine/threonine-protein kinase At2g14510">
    <location>
        <begin position="24"/>
        <end position="868"/>
    </location>
</feature>
<feature type="topological domain" description="Extracellular" evidence="3">
    <location>
        <begin position="24"/>
        <end position="510"/>
    </location>
</feature>
<feature type="transmembrane region" description="Helical" evidence="3">
    <location>
        <begin position="511"/>
        <end position="531"/>
    </location>
</feature>
<feature type="topological domain" description="Cytoplasmic" evidence="3">
    <location>
        <begin position="532"/>
        <end position="868"/>
    </location>
</feature>
<feature type="repeat" description="LRR 1">
    <location>
        <begin position="412"/>
        <end position="435"/>
    </location>
</feature>
<feature type="repeat" description="LRR 2">
    <location>
        <begin position="436"/>
        <end position="458"/>
    </location>
</feature>
<feature type="repeat" description="LRR 3">
    <location>
        <begin position="460"/>
        <end position="482"/>
    </location>
</feature>
<feature type="domain" description="Protein kinase" evidence="4">
    <location>
        <begin position="563"/>
        <end position="832"/>
    </location>
</feature>
<feature type="active site" description="Proton acceptor" evidence="4 5">
    <location>
        <position position="687"/>
    </location>
</feature>
<feature type="binding site" evidence="4">
    <location>
        <begin position="569"/>
        <end position="577"/>
    </location>
    <ligand>
        <name>ATP</name>
        <dbReference type="ChEBI" id="CHEBI:30616"/>
    </ligand>
</feature>
<feature type="binding site" evidence="4">
    <location>
        <position position="590"/>
    </location>
    <ligand>
        <name>ATP</name>
        <dbReference type="ChEBI" id="CHEBI:30616"/>
    </ligand>
</feature>
<feature type="modified residue" description="Phosphotyrosine" evidence="2">
    <location>
        <position position="635"/>
    </location>
</feature>
<feature type="modified residue" description="Phosphoserine" evidence="2">
    <location>
        <position position="721"/>
    </location>
</feature>
<feature type="modified residue" description="Phosphothreonine" evidence="2">
    <location>
        <position position="722"/>
    </location>
</feature>
<feature type="modified residue" description="Phosphothreonine" evidence="2">
    <location>
        <position position="727"/>
    </location>
</feature>
<feature type="modified residue" description="Phosphotyrosine" evidence="2">
    <location>
        <position position="735"/>
    </location>
</feature>
<feature type="glycosylation site" description="N-linked (GlcNAc...) asparagine" evidence="3">
    <location>
        <position position="48"/>
    </location>
</feature>
<feature type="glycosylation site" description="N-linked (GlcNAc...) asparagine" evidence="3">
    <location>
        <position position="68"/>
    </location>
</feature>
<feature type="glycosylation site" description="N-linked (GlcNAc...) asparagine" evidence="3">
    <location>
        <position position="231"/>
    </location>
</feature>
<feature type="glycosylation site" description="N-linked (GlcNAc...) asparagine" evidence="3">
    <location>
        <position position="235"/>
    </location>
</feature>
<feature type="glycosylation site" description="N-linked (GlcNAc...) asparagine" evidence="3">
    <location>
        <position position="258"/>
    </location>
</feature>
<feature type="glycosylation site" description="N-linked (GlcNAc...) asparagine" evidence="3">
    <location>
        <position position="291"/>
    </location>
</feature>
<feature type="glycosylation site" description="N-linked (GlcNAc...) asparagine" evidence="3">
    <location>
        <position position="433"/>
    </location>
</feature>
<feature type="glycosylation site" description="N-linked (GlcNAc...) asparagine" evidence="3">
    <location>
        <position position="446"/>
    </location>
</feature>
<feature type="glycosylation site" description="N-linked (GlcNAc...) asparagine" evidence="3">
    <location>
        <position position="495"/>
    </location>
</feature>
<name>Y2451_ARATH</name>